<protein>
    <recommendedName>
        <fullName evidence="1">CTP synthase</fullName>
        <ecNumber evidence="1">6.3.4.2</ecNumber>
    </recommendedName>
    <alternativeName>
        <fullName evidence="1">Cytidine 5'-triphosphate synthase</fullName>
    </alternativeName>
    <alternativeName>
        <fullName evidence="1">Cytidine triphosphate synthetase</fullName>
        <shortName evidence="1">CTP synthetase</shortName>
        <shortName evidence="1">CTPS</shortName>
    </alternativeName>
    <alternativeName>
        <fullName evidence="1">UTP--ammonia ligase</fullName>
    </alternativeName>
</protein>
<reference key="1">
    <citation type="journal article" date="2015" name="Microbiology">
        <title>Genome of Methanoregula boonei 6A8 reveals adaptations to oligotrophic peatland environments.</title>
        <authorList>
            <person name="Braeuer S."/>
            <person name="Cadillo-Quiroz H."/>
            <person name="Kyrpides N."/>
            <person name="Woyke T."/>
            <person name="Goodwin L."/>
            <person name="Detter C."/>
            <person name="Podell S."/>
            <person name="Yavitt J.B."/>
            <person name="Zinder S.H."/>
        </authorList>
    </citation>
    <scope>NUCLEOTIDE SEQUENCE [LARGE SCALE GENOMIC DNA]</scope>
    <source>
        <strain>DSM 21154 / JCM 14090 / 6A8</strain>
    </source>
</reference>
<feature type="chain" id="PRO_1000139484" description="CTP synthase">
    <location>
        <begin position="1"/>
        <end position="526"/>
    </location>
</feature>
<feature type="domain" description="Glutamine amidotransferase type-1" evidence="1">
    <location>
        <begin position="293"/>
        <end position="525"/>
    </location>
</feature>
<feature type="region of interest" description="Amidoligase domain" evidence="1">
    <location>
        <begin position="1"/>
        <end position="270"/>
    </location>
</feature>
<feature type="active site" description="Nucleophile; for glutamine hydrolysis" evidence="1">
    <location>
        <position position="376"/>
    </location>
</feature>
<feature type="active site" evidence="1">
    <location>
        <position position="498"/>
    </location>
</feature>
<feature type="active site" evidence="1">
    <location>
        <position position="500"/>
    </location>
</feature>
<feature type="binding site" evidence="1">
    <location>
        <position position="12"/>
    </location>
    <ligand>
        <name>CTP</name>
        <dbReference type="ChEBI" id="CHEBI:37563"/>
        <note>allosteric inhibitor</note>
    </ligand>
</feature>
<feature type="binding site" evidence="1">
    <location>
        <position position="12"/>
    </location>
    <ligand>
        <name>UTP</name>
        <dbReference type="ChEBI" id="CHEBI:46398"/>
    </ligand>
</feature>
<feature type="binding site" evidence="1">
    <location>
        <begin position="13"/>
        <end position="18"/>
    </location>
    <ligand>
        <name>ATP</name>
        <dbReference type="ChEBI" id="CHEBI:30616"/>
    </ligand>
</feature>
<feature type="binding site" evidence="1">
    <location>
        <position position="70"/>
    </location>
    <ligand>
        <name>ATP</name>
        <dbReference type="ChEBI" id="CHEBI:30616"/>
    </ligand>
</feature>
<feature type="binding site" evidence="1">
    <location>
        <position position="70"/>
    </location>
    <ligand>
        <name>Mg(2+)</name>
        <dbReference type="ChEBI" id="CHEBI:18420"/>
    </ligand>
</feature>
<feature type="binding site" evidence="1">
    <location>
        <position position="145"/>
    </location>
    <ligand>
        <name>Mg(2+)</name>
        <dbReference type="ChEBI" id="CHEBI:18420"/>
    </ligand>
</feature>
<feature type="binding site" evidence="1">
    <location>
        <begin position="152"/>
        <end position="154"/>
    </location>
    <ligand>
        <name>CTP</name>
        <dbReference type="ChEBI" id="CHEBI:37563"/>
        <note>allosteric inhibitor</note>
    </ligand>
</feature>
<feature type="binding site" evidence="1">
    <location>
        <begin position="191"/>
        <end position="196"/>
    </location>
    <ligand>
        <name>CTP</name>
        <dbReference type="ChEBI" id="CHEBI:37563"/>
        <note>allosteric inhibitor</note>
    </ligand>
</feature>
<feature type="binding site" evidence="1">
    <location>
        <begin position="191"/>
        <end position="196"/>
    </location>
    <ligand>
        <name>UTP</name>
        <dbReference type="ChEBI" id="CHEBI:46398"/>
    </ligand>
</feature>
<feature type="binding site" evidence="1">
    <location>
        <position position="227"/>
    </location>
    <ligand>
        <name>CTP</name>
        <dbReference type="ChEBI" id="CHEBI:37563"/>
        <note>allosteric inhibitor</note>
    </ligand>
</feature>
<feature type="binding site" evidence="1">
    <location>
        <position position="227"/>
    </location>
    <ligand>
        <name>UTP</name>
        <dbReference type="ChEBI" id="CHEBI:46398"/>
    </ligand>
</feature>
<feature type="binding site" evidence="1">
    <location>
        <position position="349"/>
    </location>
    <ligand>
        <name>L-glutamine</name>
        <dbReference type="ChEBI" id="CHEBI:58359"/>
    </ligand>
</feature>
<feature type="binding site" evidence="1">
    <location>
        <begin position="377"/>
        <end position="380"/>
    </location>
    <ligand>
        <name>L-glutamine</name>
        <dbReference type="ChEBI" id="CHEBI:58359"/>
    </ligand>
</feature>
<feature type="binding site" evidence="1">
    <location>
        <position position="400"/>
    </location>
    <ligand>
        <name>L-glutamine</name>
        <dbReference type="ChEBI" id="CHEBI:58359"/>
    </ligand>
</feature>
<feature type="binding site" evidence="1">
    <location>
        <position position="455"/>
    </location>
    <ligand>
        <name>L-glutamine</name>
        <dbReference type="ChEBI" id="CHEBI:58359"/>
    </ligand>
</feature>
<accession>A7IA93</accession>
<comment type="function">
    <text evidence="1">Catalyzes the ATP-dependent amination of UTP to CTP with either L-glutamine or ammonia as the source of nitrogen. Regulates intracellular CTP levels through interactions with the four ribonucleotide triphosphates.</text>
</comment>
<comment type="catalytic activity">
    <reaction evidence="1">
        <text>UTP + L-glutamine + ATP + H2O = CTP + L-glutamate + ADP + phosphate + 2 H(+)</text>
        <dbReference type="Rhea" id="RHEA:26426"/>
        <dbReference type="ChEBI" id="CHEBI:15377"/>
        <dbReference type="ChEBI" id="CHEBI:15378"/>
        <dbReference type="ChEBI" id="CHEBI:29985"/>
        <dbReference type="ChEBI" id="CHEBI:30616"/>
        <dbReference type="ChEBI" id="CHEBI:37563"/>
        <dbReference type="ChEBI" id="CHEBI:43474"/>
        <dbReference type="ChEBI" id="CHEBI:46398"/>
        <dbReference type="ChEBI" id="CHEBI:58359"/>
        <dbReference type="ChEBI" id="CHEBI:456216"/>
        <dbReference type="EC" id="6.3.4.2"/>
    </reaction>
</comment>
<comment type="catalytic activity">
    <reaction evidence="1">
        <text>L-glutamine + H2O = L-glutamate + NH4(+)</text>
        <dbReference type="Rhea" id="RHEA:15889"/>
        <dbReference type="ChEBI" id="CHEBI:15377"/>
        <dbReference type="ChEBI" id="CHEBI:28938"/>
        <dbReference type="ChEBI" id="CHEBI:29985"/>
        <dbReference type="ChEBI" id="CHEBI:58359"/>
    </reaction>
</comment>
<comment type="catalytic activity">
    <reaction evidence="1">
        <text>UTP + NH4(+) + ATP = CTP + ADP + phosphate + 2 H(+)</text>
        <dbReference type="Rhea" id="RHEA:16597"/>
        <dbReference type="ChEBI" id="CHEBI:15378"/>
        <dbReference type="ChEBI" id="CHEBI:28938"/>
        <dbReference type="ChEBI" id="CHEBI:30616"/>
        <dbReference type="ChEBI" id="CHEBI:37563"/>
        <dbReference type="ChEBI" id="CHEBI:43474"/>
        <dbReference type="ChEBI" id="CHEBI:46398"/>
        <dbReference type="ChEBI" id="CHEBI:456216"/>
    </reaction>
</comment>
<comment type="activity regulation">
    <text evidence="1">Allosterically activated by GTP, when glutamine is the substrate; GTP has no effect on the reaction when ammonia is the substrate. The allosteric effector GTP functions by stabilizing the protein conformation that binds the tetrahedral intermediate(s) formed during glutamine hydrolysis. Inhibited by the product CTP, via allosteric rather than competitive inhibition.</text>
</comment>
<comment type="pathway">
    <text evidence="1">Pyrimidine metabolism; CTP biosynthesis via de novo pathway; CTP from UDP: step 2/2.</text>
</comment>
<comment type="subunit">
    <text evidence="1">Homotetramer.</text>
</comment>
<comment type="miscellaneous">
    <text evidence="1">CTPSs have evolved a hybrid strategy for distinguishing between UTP and CTP. The overlapping regions of the product feedback inhibitory and substrate sites recognize a common feature in both compounds, the triphosphate moiety. To differentiate isosteric substrate and product pyrimidine rings, an additional pocket far from the expected kinase/ligase catalytic site, specifically recognizes the cytosine and ribose portions of the product inhibitor.</text>
</comment>
<comment type="similarity">
    <text evidence="1">Belongs to the CTP synthase family.</text>
</comment>
<proteinExistence type="inferred from homology"/>
<organism>
    <name type="scientific">Methanoregula boonei (strain DSM 21154 / JCM 14090 / 6A8)</name>
    <dbReference type="NCBI Taxonomy" id="456442"/>
    <lineage>
        <taxon>Archaea</taxon>
        <taxon>Methanobacteriati</taxon>
        <taxon>Methanobacteriota</taxon>
        <taxon>Stenosarchaea group</taxon>
        <taxon>Methanomicrobia</taxon>
        <taxon>Methanomicrobiales</taxon>
        <taxon>Methanoregulaceae</taxon>
        <taxon>Methanoregula</taxon>
    </lineage>
</organism>
<evidence type="ECO:0000255" key="1">
    <source>
        <dbReference type="HAMAP-Rule" id="MF_01227"/>
    </source>
</evidence>
<gene>
    <name evidence="1" type="primary">pyrG</name>
    <name type="ordered locus">Mboo_2140</name>
</gene>
<keyword id="KW-0067">ATP-binding</keyword>
<keyword id="KW-0315">Glutamine amidotransferase</keyword>
<keyword id="KW-0436">Ligase</keyword>
<keyword id="KW-0460">Magnesium</keyword>
<keyword id="KW-0479">Metal-binding</keyword>
<keyword id="KW-0547">Nucleotide-binding</keyword>
<keyword id="KW-0665">Pyrimidine biosynthesis</keyword>
<keyword id="KW-1185">Reference proteome</keyword>
<sequence length="526" mass="58587">MKYIFVTGGVMSGLGKGITAASVGRILKNRGYRVTAVKIDPYLNIDAGTMNPAQHGEVFVLKDGGEVDLDLGNYERFLDIELTSSHNITTGKVYRTVIEKERRGDFLGETVQIIPHITDQIKTCIRQAAEETFPDGTKADVCLVEVGGTVGDIESMPFLEAVRQMRGELDEHDYVLVHVTLVPEDAMGDLKTKPTQHSVKALRELGLHADIIVCRSERVVGANTKRKISAFCDLPLSAVISAATARDTYEVPMEMEKEGIADVLSTHLGLEKKETDPSWYRLVTKEYTNRVTVAIVSKYGIEDVYISIKEALKHAGRALSTEVKIVWLDAERYEPCSLKDYDGILIPGGFGKRGIEGKIGAIRFARENKVPFLGLCLGFQLATIEFARHKCGIADATSEEFGEGSHVIALLPEQESVTELGGTMRLGDYTSDIRDKTLAMKLYGKSQIIERHRHRYEVNPHYIEKLEKEGLVFSATNKNRMECLELPGHPFFFATQFHPEFKSRPTRPSPPYLGFVEACRANKRTT</sequence>
<dbReference type="EC" id="6.3.4.2" evidence="1"/>
<dbReference type="EMBL" id="CP000780">
    <property type="protein sequence ID" value="ABS56654.1"/>
    <property type="molecule type" value="Genomic_DNA"/>
</dbReference>
<dbReference type="RefSeq" id="WP_012107712.1">
    <property type="nucleotide sequence ID" value="NC_009712.1"/>
</dbReference>
<dbReference type="SMR" id="A7IA93"/>
<dbReference type="STRING" id="456442.Mboo_2140"/>
<dbReference type="GeneID" id="5409958"/>
<dbReference type="KEGG" id="mbn:Mboo_2140"/>
<dbReference type="eggNOG" id="arCOG00063">
    <property type="taxonomic scope" value="Archaea"/>
</dbReference>
<dbReference type="HOGENOM" id="CLU_011675_5_0_2"/>
<dbReference type="OrthoDB" id="52769at2157"/>
<dbReference type="UniPathway" id="UPA00159">
    <property type="reaction ID" value="UER00277"/>
</dbReference>
<dbReference type="Proteomes" id="UP000002408">
    <property type="component" value="Chromosome"/>
</dbReference>
<dbReference type="GO" id="GO:0005524">
    <property type="term" value="F:ATP binding"/>
    <property type="evidence" value="ECO:0007669"/>
    <property type="project" value="UniProtKB-KW"/>
</dbReference>
<dbReference type="GO" id="GO:0003883">
    <property type="term" value="F:CTP synthase activity"/>
    <property type="evidence" value="ECO:0007669"/>
    <property type="project" value="UniProtKB-UniRule"/>
</dbReference>
<dbReference type="GO" id="GO:0004359">
    <property type="term" value="F:glutaminase activity"/>
    <property type="evidence" value="ECO:0007669"/>
    <property type="project" value="RHEA"/>
</dbReference>
<dbReference type="GO" id="GO:0042802">
    <property type="term" value="F:identical protein binding"/>
    <property type="evidence" value="ECO:0007669"/>
    <property type="project" value="TreeGrafter"/>
</dbReference>
<dbReference type="GO" id="GO:0046872">
    <property type="term" value="F:metal ion binding"/>
    <property type="evidence" value="ECO:0007669"/>
    <property type="project" value="UniProtKB-KW"/>
</dbReference>
<dbReference type="GO" id="GO:0044210">
    <property type="term" value="P:'de novo' CTP biosynthetic process"/>
    <property type="evidence" value="ECO:0007669"/>
    <property type="project" value="UniProtKB-UniRule"/>
</dbReference>
<dbReference type="GO" id="GO:0019856">
    <property type="term" value="P:pyrimidine nucleobase biosynthetic process"/>
    <property type="evidence" value="ECO:0007669"/>
    <property type="project" value="TreeGrafter"/>
</dbReference>
<dbReference type="CDD" id="cd03113">
    <property type="entry name" value="CTPS_N"/>
    <property type="match status" value="1"/>
</dbReference>
<dbReference type="CDD" id="cd01746">
    <property type="entry name" value="GATase1_CTP_Synthase"/>
    <property type="match status" value="1"/>
</dbReference>
<dbReference type="FunFam" id="3.40.50.300:FF:000009">
    <property type="entry name" value="CTP synthase"/>
    <property type="match status" value="1"/>
</dbReference>
<dbReference type="FunFam" id="3.40.50.880:FF:000002">
    <property type="entry name" value="CTP synthase"/>
    <property type="match status" value="1"/>
</dbReference>
<dbReference type="Gene3D" id="3.40.50.880">
    <property type="match status" value="1"/>
</dbReference>
<dbReference type="Gene3D" id="3.40.50.300">
    <property type="entry name" value="P-loop containing nucleotide triphosphate hydrolases"/>
    <property type="match status" value="1"/>
</dbReference>
<dbReference type="HAMAP" id="MF_01227">
    <property type="entry name" value="PyrG"/>
    <property type="match status" value="1"/>
</dbReference>
<dbReference type="InterPro" id="IPR029062">
    <property type="entry name" value="Class_I_gatase-like"/>
</dbReference>
<dbReference type="InterPro" id="IPR004468">
    <property type="entry name" value="CTP_synthase"/>
</dbReference>
<dbReference type="InterPro" id="IPR017456">
    <property type="entry name" value="CTP_synthase_N"/>
</dbReference>
<dbReference type="InterPro" id="IPR017926">
    <property type="entry name" value="GATASE"/>
</dbReference>
<dbReference type="InterPro" id="IPR033828">
    <property type="entry name" value="GATase1_CTP_Synthase"/>
</dbReference>
<dbReference type="InterPro" id="IPR027417">
    <property type="entry name" value="P-loop_NTPase"/>
</dbReference>
<dbReference type="NCBIfam" id="NF003792">
    <property type="entry name" value="PRK05380.1"/>
    <property type="match status" value="1"/>
</dbReference>
<dbReference type="NCBIfam" id="TIGR00337">
    <property type="entry name" value="PyrG"/>
    <property type="match status" value="1"/>
</dbReference>
<dbReference type="PANTHER" id="PTHR11550">
    <property type="entry name" value="CTP SYNTHASE"/>
    <property type="match status" value="1"/>
</dbReference>
<dbReference type="PANTHER" id="PTHR11550:SF0">
    <property type="entry name" value="CTP SYNTHASE-RELATED"/>
    <property type="match status" value="1"/>
</dbReference>
<dbReference type="Pfam" id="PF06418">
    <property type="entry name" value="CTP_synth_N"/>
    <property type="match status" value="1"/>
</dbReference>
<dbReference type="Pfam" id="PF00117">
    <property type="entry name" value="GATase"/>
    <property type="match status" value="1"/>
</dbReference>
<dbReference type="SUPFAM" id="SSF52317">
    <property type="entry name" value="Class I glutamine amidotransferase-like"/>
    <property type="match status" value="1"/>
</dbReference>
<dbReference type="SUPFAM" id="SSF52540">
    <property type="entry name" value="P-loop containing nucleoside triphosphate hydrolases"/>
    <property type="match status" value="1"/>
</dbReference>
<dbReference type="PROSITE" id="PS51273">
    <property type="entry name" value="GATASE_TYPE_1"/>
    <property type="match status" value="1"/>
</dbReference>
<name>PYRG_METB6</name>